<keyword id="KW-0963">Cytoplasm</keyword>
<keyword id="KW-0903">Direct protein sequencing</keyword>
<keyword id="KW-1185">Reference proteome</keyword>
<evidence type="ECO:0000256" key="1">
    <source>
        <dbReference type="SAM" id="MobiDB-lite"/>
    </source>
</evidence>
<evidence type="ECO:0000305" key="2"/>
<name>FUC2_RAT</name>
<comment type="function">
    <text>Has a role in the physiological regulation of fucosylation processes.</text>
</comment>
<comment type="subunit">
    <text>Oligomer.</text>
</comment>
<comment type="subcellular location">
    <subcellularLocation>
        <location>Cytoplasm</location>
    </subcellularLocation>
</comment>
<comment type="similarity">
    <text evidence="2">To human SET/PHAPII protein.</text>
</comment>
<proteinExistence type="evidence at protein level"/>
<feature type="chain" id="PRO_0000087378" description="Fuctinin-2">
    <location>
        <begin position="1"/>
        <end position="22" status="greater than"/>
    </location>
</feature>
<feature type="region of interest" description="Disordered" evidence="1">
    <location>
        <begin position="1"/>
        <end position="22"/>
    </location>
</feature>
<feature type="compositionally biased region" description="Basic and acidic residues" evidence="1">
    <location>
        <begin position="7"/>
        <end position="22"/>
    </location>
</feature>
<feature type="non-terminal residue">
    <location>
        <position position="22"/>
    </location>
</feature>
<accession>P80348</accession>
<protein>
    <recommendedName>
        <fullName>Fuctinin-2</fullName>
    </recommendedName>
    <alternativeName>
        <fullName>Fucosyltransferase inhibitor 2</fullName>
    </alternativeName>
</protein>
<dbReference type="PIR" id="S78007">
    <property type="entry name" value="S78007"/>
</dbReference>
<dbReference type="InParanoid" id="P80348"/>
<dbReference type="Proteomes" id="UP000002494">
    <property type="component" value="Unplaced"/>
</dbReference>
<dbReference type="GO" id="GO:0005737">
    <property type="term" value="C:cytoplasm"/>
    <property type="evidence" value="ECO:0007669"/>
    <property type="project" value="UniProtKB-SubCell"/>
</dbReference>
<organism>
    <name type="scientific">Rattus norvegicus</name>
    <name type="common">Rat</name>
    <dbReference type="NCBI Taxonomy" id="10116"/>
    <lineage>
        <taxon>Eukaryota</taxon>
        <taxon>Metazoa</taxon>
        <taxon>Chordata</taxon>
        <taxon>Craniata</taxon>
        <taxon>Vertebrata</taxon>
        <taxon>Euteleostomi</taxon>
        <taxon>Mammalia</taxon>
        <taxon>Eutheria</taxon>
        <taxon>Euarchontoglires</taxon>
        <taxon>Glires</taxon>
        <taxon>Rodentia</taxon>
        <taxon>Myomorpha</taxon>
        <taxon>Muroidea</taxon>
        <taxon>Muridae</taxon>
        <taxon>Murinae</taxon>
        <taxon>Rattus</taxon>
    </lineage>
</organism>
<reference key="1">
    <citation type="journal article" date="1994" name="Eur. J. Biochem.">
        <title>Purification and partial amino acid sequence of fuctinin, an endogenous inhibitor of fucosyltransferase activities.</title>
        <authorList>
            <person name="Ruggiero-Lopez D."/>
            <person name="Manioc C."/>
            <person name="Geourjon C."/>
            <person name="Louisot P."/>
            <person name="Martin A."/>
        </authorList>
    </citation>
    <scope>PROTEIN SEQUENCE</scope>
    <source>
        <strain>Sprague-Dawley</strain>
        <tissue>Small intestine mucosa</tissue>
    </source>
</reference>
<sequence>ELPGLPKGEKEQQEAIEHIDEV</sequence>